<organism>
    <name type="scientific">Staphylococcus haemolyticus (strain JCSC1435)</name>
    <dbReference type="NCBI Taxonomy" id="279808"/>
    <lineage>
        <taxon>Bacteria</taxon>
        <taxon>Bacillati</taxon>
        <taxon>Bacillota</taxon>
        <taxon>Bacilli</taxon>
        <taxon>Bacillales</taxon>
        <taxon>Staphylococcaceae</taxon>
        <taxon>Staphylococcus</taxon>
    </lineage>
</organism>
<protein>
    <recommendedName>
        <fullName evidence="1">UPF0342 protein SH1117</fullName>
    </recommendedName>
</protein>
<comment type="similarity">
    <text evidence="1">Belongs to the UPF0342 family.</text>
</comment>
<sequence>MAVNLYDYANQLEQALRDSDEYKAIKDAFSKVKDNEESKKLFDEFRETQLSFQQKQMQGEEIPEEDLAKAQEQAQAIEKDENISELMQAEQKMSQVFQEINQIIVKPLDEIYAD</sequence>
<gene>
    <name type="ordered locus">SH1117</name>
</gene>
<dbReference type="EMBL" id="AP006716">
    <property type="protein sequence ID" value="BAE04426.1"/>
    <property type="molecule type" value="Genomic_DNA"/>
</dbReference>
<dbReference type="RefSeq" id="WP_011275418.1">
    <property type="nucleotide sequence ID" value="NC_007168.1"/>
</dbReference>
<dbReference type="SMR" id="Q4L7E9"/>
<dbReference type="KEGG" id="sha:SH1117"/>
<dbReference type="eggNOG" id="COG3679">
    <property type="taxonomic scope" value="Bacteria"/>
</dbReference>
<dbReference type="HOGENOM" id="CLU_140243_3_0_9"/>
<dbReference type="OrthoDB" id="9811402at2"/>
<dbReference type="Proteomes" id="UP000000543">
    <property type="component" value="Chromosome"/>
</dbReference>
<dbReference type="Gene3D" id="1.20.1500.10">
    <property type="entry name" value="YheA/YmcA-like"/>
    <property type="match status" value="1"/>
</dbReference>
<dbReference type="HAMAP" id="MF_01526">
    <property type="entry name" value="UPF0342"/>
    <property type="match status" value="1"/>
</dbReference>
<dbReference type="InterPro" id="IPR010368">
    <property type="entry name" value="Com_YlbF"/>
</dbReference>
<dbReference type="InterPro" id="IPR023378">
    <property type="entry name" value="YheA/YmcA-like_dom_sf"/>
</dbReference>
<dbReference type="NCBIfam" id="NF010212">
    <property type="entry name" value="PRK13676.1-5"/>
    <property type="match status" value="1"/>
</dbReference>
<dbReference type="Pfam" id="PF06133">
    <property type="entry name" value="Com_YlbF"/>
    <property type="match status" value="1"/>
</dbReference>
<dbReference type="SUPFAM" id="SSF158622">
    <property type="entry name" value="YheA/YmcA-like"/>
    <property type="match status" value="1"/>
</dbReference>
<feature type="chain" id="PRO_0000292743" description="UPF0342 protein SH1117">
    <location>
        <begin position="1"/>
        <end position="114"/>
    </location>
</feature>
<name>Y1117_STAHJ</name>
<proteinExistence type="inferred from homology"/>
<accession>Q4L7E9</accession>
<evidence type="ECO:0000255" key="1">
    <source>
        <dbReference type="HAMAP-Rule" id="MF_01526"/>
    </source>
</evidence>
<reference key="1">
    <citation type="journal article" date="2005" name="J. Bacteriol.">
        <title>Whole-genome sequencing of Staphylococcus haemolyticus uncovers the extreme plasticity of its genome and the evolution of human-colonizing staphylococcal species.</title>
        <authorList>
            <person name="Takeuchi F."/>
            <person name="Watanabe S."/>
            <person name="Baba T."/>
            <person name="Yuzawa H."/>
            <person name="Ito T."/>
            <person name="Morimoto Y."/>
            <person name="Kuroda M."/>
            <person name="Cui L."/>
            <person name="Takahashi M."/>
            <person name="Ankai A."/>
            <person name="Baba S."/>
            <person name="Fukui S."/>
            <person name="Lee J.C."/>
            <person name="Hiramatsu K."/>
        </authorList>
    </citation>
    <scope>NUCLEOTIDE SEQUENCE [LARGE SCALE GENOMIC DNA]</scope>
    <source>
        <strain>JCSC1435</strain>
    </source>
</reference>